<comment type="catalytic activity">
    <reaction evidence="1">
        <text>L-arginine + H2O = L-citrulline + NH4(+)</text>
        <dbReference type="Rhea" id="RHEA:19597"/>
        <dbReference type="ChEBI" id="CHEBI:15377"/>
        <dbReference type="ChEBI" id="CHEBI:28938"/>
        <dbReference type="ChEBI" id="CHEBI:32682"/>
        <dbReference type="ChEBI" id="CHEBI:57743"/>
        <dbReference type="EC" id="3.5.3.6"/>
    </reaction>
</comment>
<comment type="pathway">
    <text evidence="1">Amino-acid degradation; L-arginine degradation via ADI pathway; carbamoyl phosphate from L-arginine: step 1/2.</text>
</comment>
<comment type="subcellular location">
    <subcellularLocation>
        <location evidence="1">Cytoplasm</location>
    </subcellularLocation>
</comment>
<comment type="similarity">
    <text evidence="1">Belongs to the arginine deiminase family.</text>
</comment>
<proteinExistence type="inferred from homology"/>
<accession>A6QKC4</accession>
<dbReference type="EC" id="3.5.3.6" evidence="1"/>
<dbReference type="EMBL" id="AP009351">
    <property type="protein sequence ID" value="BAF68806.1"/>
    <property type="molecule type" value="Genomic_DNA"/>
</dbReference>
<dbReference type="RefSeq" id="WP_000129411.1">
    <property type="nucleotide sequence ID" value="NZ_JBBIAE010000005.1"/>
</dbReference>
<dbReference type="SMR" id="A6QKC4"/>
<dbReference type="KEGG" id="sae:NWMN_2534"/>
<dbReference type="HOGENOM" id="CLU_052662_0_1_9"/>
<dbReference type="UniPathway" id="UPA00254">
    <property type="reaction ID" value="UER00364"/>
</dbReference>
<dbReference type="Proteomes" id="UP000006386">
    <property type="component" value="Chromosome"/>
</dbReference>
<dbReference type="GO" id="GO:0005737">
    <property type="term" value="C:cytoplasm"/>
    <property type="evidence" value="ECO:0007669"/>
    <property type="project" value="UniProtKB-SubCell"/>
</dbReference>
<dbReference type="GO" id="GO:0016990">
    <property type="term" value="F:arginine deiminase activity"/>
    <property type="evidence" value="ECO:0007669"/>
    <property type="project" value="UniProtKB-UniRule"/>
</dbReference>
<dbReference type="GO" id="GO:0019547">
    <property type="term" value="P:arginine catabolic process to ornithine"/>
    <property type="evidence" value="ECO:0007669"/>
    <property type="project" value="UniProtKB-UniRule"/>
</dbReference>
<dbReference type="GO" id="GO:0019546">
    <property type="term" value="P:arginine deiminase pathway"/>
    <property type="evidence" value="ECO:0007669"/>
    <property type="project" value="TreeGrafter"/>
</dbReference>
<dbReference type="FunFam" id="1.10.3930.10:FF:000001">
    <property type="entry name" value="Arginine deiminase"/>
    <property type="match status" value="1"/>
</dbReference>
<dbReference type="Gene3D" id="1.10.3930.10">
    <property type="entry name" value="Arginine deiminase"/>
    <property type="match status" value="1"/>
</dbReference>
<dbReference type="Gene3D" id="3.75.10.10">
    <property type="entry name" value="L-arginine/glycine Amidinotransferase, Chain A"/>
    <property type="match status" value="1"/>
</dbReference>
<dbReference type="HAMAP" id="MF_00242">
    <property type="entry name" value="Arg_deiminase"/>
    <property type="match status" value="1"/>
</dbReference>
<dbReference type="InterPro" id="IPR003876">
    <property type="entry name" value="Arg_deiminase"/>
</dbReference>
<dbReference type="NCBIfam" id="TIGR01078">
    <property type="entry name" value="arcA"/>
    <property type="match status" value="1"/>
</dbReference>
<dbReference type="NCBIfam" id="NF002381">
    <property type="entry name" value="PRK01388.1"/>
    <property type="match status" value="1"/>
</dbReference>
<dbReference type="PANTHER" id="PTHR47271">
    <property type="entry name" value="ARGININE DEIMINASE"/>
    <property type="match status" value="1"/>
</dbReference>
<dbReference type="PANTHER" id="PTHR47271:SF2">
    <property type="entry name" value="ARGININE DEIMINASE"/>
    <property type="match status" value="1"/>
</dbReference>
<dbReference type="Pfam" id="PF02274">
    <property type="entry name" value="ADI"/>
    <property type="match status" value="1"/>
</dbReference>
<dbReference type="PIRSF" id="PIRSF006356">
    <property type="entry name" value="Arg_deiminase"/>
    <property type="match status" value="1"/>
</dbReference>
<dbReference type="PRINTS" id="PR01466">
    <property type="entry name" value="ARGDEIMINASE"/>
</dbReference>
<dbReference type="SUPFAM" id="SSF55909">
    <property type="entry name" value="Pentein"/>
    <property type="match status" value="1"/>
</dbReference>
<name>ARCA_STAAE</name>
<protein>
    <recommendedName>
        <fullName evidence="1">Arginine deiminase</fullName>
        <shortName evidence="1">ADI</shortName>
        <ecNumber evidence="1">3.5.3.6</ecNumber>
    </recommendedName>
    <alternativeName>
        <fullName evidence="1">Arginine dihydrolase</fullName>
        <shortName evidence="1">AD</shortName>
    </alternativeName>
</protein>
<feature type="chain" id="PRO_1000071835" description="Arginine deiminase">
    <location>
        <begin position="1"/>
        <end position="411"/>
    </location>
</feature>
<feature type="active site" description="Amidino-cysteine intermediate" evidence="1">
    <location>
        <position position="401"/>
    </location>
</feature>
<sequence length="411" mass="46915">MTDGPIKVNSEIGALKTVLLKRPGKELENLVPDYLDGLLFDDIPYLEVAQKEHDHFAQVLREEGVEVLYLEKLAAESIENPQVRSEFIDDVLAESKKTILGHEEEIKALFATLSNQELVDKIMSGVRKEEINPKCTHLVEYMDDKYPFYLDPMPNLYFTRDPQASIGHGITINRMFWRARRRESIFIQYIVKHHPRFKDANIPIWLDRDCPFNIEGGDELVLSKDVLAIGVSERTSAQAIEKLARRIFENPQATFKKVVAIEIPTSRTFMHLDTVFTMIDYDKFTMHSAILKAEGNMNIFIIEYDDVNKDIAIKQSSHLKDTLEDVLGIDDIQFIPTGNGDVIDGAREQWNDGSNTLCIRPGVVVTYDRNYVSNDLLRQKGIKVIEISGSELVRGRGGPRCMSQPLFREDI</sequence>
<gene>
    <name evidence="1" type="primary">arcA</name>
    <name type="ordered locus">NWMN_2534</name>
</gene>
<evidence type="ECO:0000255" key="1">
    <source>
        <dbReference type="HAMAP-Rule" id="MF_00242"/>
    </source>
</evidence>
<organism>
    <name type="scientific">Staphylococcus aureus (strain Newman)</name>
    <dbReference type="NCBI Taxonomy" id="426430"/>
    <lineage>
        <taxon>Bacteria</taxon>
        <taxon>Bacillati</taxon>
        <taxon>Bacillota</taxon>
        <taxon>Bacilli</taxon>
        <taxon>Bacillales</taxon>
        <taxon>Staphylococcaceae</taxon>
        <taxon>Staphylococcus</taxon>
    </lineage>
</organism>
<reference key="1">
    <citation type="journal article" date="2008" name="J. Bacteriol.">
        <title>Genome sequence of Staphylococcus aureus strain Newman and comparative analysis of staphylococcal genomes: polymorphism and evolution of two major pathogenicity islands.</title>
        <authorList>
            <person name="Baba T."/>
            <person name="Bae T."/>
            <person name="Schneewind O."/>
            <person name="Takeuchi F."/>
            <person name="Hiramatsu K."/>
        </authorList>
    </citation>
    <scope>NUCLEOTIDE SEQUENCE [LARGE SCALE GENOMIC DNA]</scope>
    <source>
        <strain>Newman</strain>
    </source>
</reference>
<keyword id="KW-0056">Arginine metabolism</keyword>
<keyword id="KW-0963">Cytoplasm</keyword>
<keyword id="KW-0378">Hydrolase</keyword>